<gene>
    <name type="primary">RTC5</name>
    <name type="ordered locus">CAGL0L11616g</name>
</gene>
<proteinExistence type="inferred from homology"/>
<feature type="chain" id="PRO_0000408819" description="Restriction of telomere capping protein 5">
    <location>
        <begin position="1"/>
        <end position="555"/>
    </location>
</feature>
<feature type="domain" description="TLDc" evidence="2">
    <location>
        <begin position="280"/>
        <end position="503"/>
    </location>
</feature>
<evidence type="ECO:0000250" key="1"/>
<evidence type="ECO:0000255" key="2">
    <source>
        <dbReference type="PROSITE-ProRule" id="PRU01234"/>
    </source>
</evidence>
<evidence type="ECO:0000305" key="3"/>
<comment type="function">
    <text evidence="1">May be involved in a process influencing telomere capping.</text>
</comment>
<comment type="subcellular location">
    <subcellularLocation>
        <location evidence="1">Cytoplasm</location>
    </subcellularLocation>
</comment>
<comment type="similarity">
    <text evidence="3">Belongs to the RTC5 family.</text>
</comment>
<protein>
    <recommendedName>
        <fullName>Restriction of telomere capping protein 5</fullName>
    </recommendedName>
</protein>
<organism>
    <name type="scientific">Candida glabrata (strain ATCC 2001 / BCRC 20586 / JCM 3761 / NBRC 0622 / NRRL Y-65 / CBS 138)</name>
    <name type="common">Yeast</name>
    <name type="synonym">Nakaseomyces glabratus</name>
    <dbReference type="NCBI Taxonomy" id="284593"/>
    <lineage>
        <taxon>Eukaryota</taxon>
        <taxon>Fungi</taxon>
        <taxon>Dikarya</taxon>
        <taxon>Ascomycota</taxon>
        <taxon>Saccharomycotina</taxon>
        <taxon>Saccharomycetes</taxon>
        <taxon>Saccharomycetales</taxon>
        <taxon>Saccharomycetaceae</taxon>
        <taxon>Nakaseomyces</taxon>
    </lineage>
</organism>
<reference key="1">
    <citation type="journal article" date="2004" name="Nature">
        <title>Genome evolution in yeasts.</title>
        <authorList>
            <person name="Dujon B."/>
            <person name="Sherman D."/>
            <person name="Fischer G."/>
            <person name="Durrens P."/>
            <person name="Casaregola S."/>
            <person name="Lafontaine I."/>
            <person name="de Montigny J."/>
            <person name="Marck C."/>
            <person name="Neuveglise C."/>
            <person name="Talla E."/>
            <person name="Goffard N."/>
            <person name="Frangeul L."/>
            <person name="Aigle M."/>
            <person name="Anthouard V."/>
            <person name="Babour A."/>
            <person name="Barbe V."/>
            <person name="Barnay S."/>
            <person name="Blanchin S."/>
            <person name="Beckerich J.-M."/>
            <person name="Beyne E."/>
            <person name="Bleykasten C."/>
            <person name="Boisrame A."/>
            <person name="Boyer J."/>
            <person name="Cattolico L."/>
            <person name="Confanioleri F."/>
            <person name="de Daruvar A."/>
            <person name="Despons L."/>
            <person name="Fabre E."/>
            <person name="Fairhead C."/>
            <person name="Ferry-Dumazet H."/>
            <person name="Groppi A."/>
            <person name="Hantraye F."/>
            <person name="Hennequin C."/>
            <person name="Jauniaux N."/>
            <person name="Joyet P."/>
            <person name="Kachouri R."/>
            <person name="Kerrest A."/>
            <person name="Koszul R."/>
            <person name="Lemaire M."/>
            <person name="Lesur I."/>
            <person name="Ma L."/>
            <person name="Muller H."/>
            <person name="Nicaud J.-M."/>
            <person name="Nikolski M."/>
            <person name="Oztas S."/>
            <person name="Ozier-Kalogeropoulos O."/>
            <person name="Pellenz S."/>
            <person name="Potier S."/>
            <person name="Richard G.-F."/>
            <person name="Straub M.-L."/>
            <person name="Suleau A."/>
            <person name="Swennen D."/>
            <person name="Tekaia F."/>
            <person name="Wesolowski-Louvel M."/>
            <person name="Westhof E."/>
            <person name="Wirth B."/>
            <person name="Zeniou-Meyer M."/>
            <person name="Zivanovic Y."/>
            <person name="Bolotin-Fukuhara M."/>
            <person name="Thierry A."/>
            <person name="Bouchier C."/>
            <person name="Caudron B."/>
            <person name="Scarpelli C."/>
            <person name="Gaillardin C."/>
            <person name="Weissenbach J."/>
            <person name="Wincker P."/>
            <person name="Souciet J.-L."/>
        </authorList>
    </citation>
    <scope>NUCLEOTIDE SEQUENCE [LARGE SCALE GENOMIC DNA]</scope>
    <source>
        <strain>ATCC 2001 / BCRC 20586 / JCM 3761 / NBRC 0622 / NRRL Y-65 / CBS 138</strain>
    </source>
</reference>
<dbReference type="EMBL" id="CR380958">
    <property type="protein sequence ID" value="CAG62247.1"/>
    <property type="molecule type" value="Genomic_DNA"/>
</dbReference>
<dbReference type="RefSeq" id="XP_449273.1">
    <property type="nucleotide sequence ID" value="XM_449273.1"/>
</dbReference>
<dbReference type="SMR" id="Q6FKH1"/>
<dbReference type="FunCoup" id="Q6FKH1">
    <property type="interactions" value="16"/>
</dbReference>
<dbReference type="STRING" id="284593.Q6FKH1"/>
<dbReference type="EnsemblFungi" id="CAGL0L11616g-T">
    <property type="protein sequence ID" value="CAGL0L11616g-T-p1"/>
    <property type="gene ID" value="CAGL0L11616g"/>
</dbReference>
<dbReference type="KEGG" id="cgr:2890973"/>
<dbReference type="CGD" id="CAL0135142">
    <property type="gene designation" value="CAGL0L11616g"/>
</dbReference>
<dbReference type="VEuPathDB" id="FungiDB:CAGL0L11616g"/>
<dbReference type="eggNOG" id="ENOG502QV3R">
    <property type="taxonomic scope" value="Eukaryota"/>
</dbReference>
<dbReference type="HOGENOM" id="CLU_011918_1_0_1"/>
<dbReference type="InParanoid" id="Q6FKH1"/>
<dbReference type="OMA" id="TIMELTP"/>
<dbReference type="Proteomes" id="UP000002428">
    <property type="component" value="Chromosome L"/>
</dbReference>
<dbReference type="GO" id="GO:0000329">
    <property type="term" value="C:fungal-type vacuole membrane"/>
    <property type="evidence" value="ECO:0007669"/>
    <property type="project" value="EnsemblFungi"/>
</dbReference>
<dbReference type="GO" id="GO:0032984">
    <property type="term" value="P:protein-containing complex disassembly"/>
    <property type="evidence" value="ECO:0007669"/>
    <property type="project" value="EnsemblFungi"/>
</dbReference>
<dbReference type="InterPro" id="IPR006571">
    <property type="entry name" value="TLDc_dom"/>
</dbReference>
<dbReference type="Pfam" id="PF07534">
    <property type="entry name" value="TLD"/>
    <property type="match status" value="1"/>
</dbReference>
<dbReference type="SMART" id="SM00584">
    <property type="entry name" value="TLDc"/>
    <property type="match status" value="1"/>
</dbReference>
<dbReference type="PROSITE" id="PS51886">
    <property type="entry name" value="TLDC"/>
    <property type="match status" value="1"/>
</dbReference>
<sequence length="555" mass="62104">MGQTASSPQDNKESKSHPQFKTRDEILQYFNTRVVKLFTVTEIAAFKKRFNAIDLNEPIDDTLIKEALYLDAQPNVWSAVSETIRLLQNFPLFHQPIADSITGFGLLKVIAIINVKRFEKLVNTTITRYDITVTLGLCGQAKESENKIKSTNLGDILKTYDHIEIESIHIPYDKLILLVAWLLTLVTGVATTNCKVELSDTIANWNNFKSSAISIANTISTSALGNANDIGIPATDILNAFNTIMISLVPYMSNLFEHLLFGVDDLIDHVNDLANLSHQDVLTPSLYAQVIIGLPNSITITKLQKLYVGKESGFSMRSLQSKVFRWKAPTLMIVSGTRISDDESYADSKNPRYRSFLYSFPKLRENDQNLDAIHLTKKKVTYAVYIDEPWKVSNKEKFGATNMTIMELTPQQKTYQSCMERTMYFNTIGGGIGVGSEQPIVKQNDIKFIPGNISLTMDSSLEFGVFRHVGAGGGFKTSLLDNDDSKSFEIRFIIQNVEVWGCGGEKELAEQLKQLEWEEAEAKRRQTINLQSLSEDKALLEMVGLVGQHQSGGSV</sequence>
<accession>Q6FKH1</accession>
<name>RTC5_CANGA</name>
<keyword id="KW-0963">Cytoplasm</keyword>
<keyword id="KW-1185">Reference proteome</keyword>